<reference key="1">
    <citation type="journal article" date="1995" name="Immunity">
        <title>Identification and characterization of a new member of the TNF family that induces apoptosis.</title>
        <authorList>
            <person name="Wiley S.R."/>
            <person name="Schooley K."/>
            <person name="Smolak P.J."/>
            <person name="Din W.S."/>
            <person name="Huang C.-P."/>
            <person name="Nicholl J.K."/>
            <person name="Sutherland G.R."/>
            <person name="Davis-Smith T."/>
            <person name="Rauch C."/>
            <person name="Smith C.A."/>
            <person name="Goodwin R.G."/>
        </authorList>
    </citation>
    <scope>NUCLEOTIDE SEQUENCE [MRNA]</scope>
</reference>
<protein>
    <recommendedName>
        <fullName>Tumor necrosis factor ligand superfamily member 10</fullName>
    </recommendedName>
    <alternativeName>
        <fullName>TNF-related apoptosis-inducing ligand</fullName>
        <shortName>Protein TRAIL</shortName>
    </alternativeName>
    <cdAntigenName>CD253</cdAntigenName>
</protein>
<feature type="chain" id="PRO_0000185504" description="Tumor necrosis factor ligand superfamily member 10">
    <location>
        <begin position="1"/>
        <end position="291"/>
    </location>
</feature>
<feature type="topological domain" description="Cytoplasmic" evidence="2">
    <location>
        <begin position="1"/>
        <end position="17"/>
    </location>
</feature>
<feature type="transmembrane region" description="Helical; Signal-anchor for type II membrane protein" evidence="2">
    <location>
        <begin position="18"/>
        <end position="38"/>
    </location>
</feature>
<feature type="topological domain" description="Extracellular" evidence="2">
    <location>
        <begin position="39"/>
        <end position="291"/>
    </location>
</feature>
<feature type="domain" description="THD" evidence="3">
    <location>
        <begin position="126"/>
        <end position="290"/>
    </location>
</feature>
<feature type="binding site" evidence="1">
    <location>
        <position position="240"/>
    </location>
    <ligand>
        <name>Zn(2+)</name>
        <dbReference type="ChEBI" id="CHEBI:29105"/>
        <note>ligand shared between all trimeric partners</note>
    </ligand>
</feature>
<feature type="glycosylation site" description="N-linked (GlcNAc...) asparagine" evidence="2">
    <location>
        <position position="52"/>
    </location>
</feature>
<sequence>MPSSGALKDLSFSQHFRMMVICIVLLQVLLQAVSVAVTYMYFTNEMKQLQDNYSKIGLACFSKTDEDFWDSTDGEILNRPCLQVKRQLYQLIEEVTLRTFQDTISTVPEKQLSTPPLPRGGRPQKVAAHITGITRRSNSALIPISKDGKTLGQKIESWESSRKGHSFLNHVLFRNGELVIEQEGLYYIYSQTYFRFQEAEDASKMVSKDKVRTKQLVQYIYKYTSYPDPIVLMKSARNSCWSRDAEYGLYSIYQGGLFELKKNDRIFVSVTNEHLMDLDQEASFFGAFLIN</sequence>
<dbReference type="EMBL" id="U37522">
    <property type="protein sequence ID" value="AAC52345.1"/>
    <property type="molecule type" value="mRNA"/>
</dbReference>
<dbReference type="CCDS" id="CCDS17272.1"/>
<dbReference type="RefSeq" id="NP_033451.1">
    <property type="nucleotide sequence ID" value="NM_009425.2"/>
</dbReference>
<dbReference type="PDB" id="8SLR">
    <property type="method" value="X-ray"/>
    <property type="resolution" value="2.40 A"/>
    <property type="chains" value="D=117-291"/>
</dbReference>
<dbReference type="PDBsum" id="8SLR"/>
<dbReference type="SMR" id="P50592"/>
<dbReference type="FunCoup" id="P50592">
    <property type="interactions" value="550"/>
</dbReference>
<dbReference type="STRING" id="10090.ENSMUSP00000040271"/>
<dbReference type="GlyCosmos" id="P50592">
    <property type="glycosylation" value="1 site, No reported glycans"/>
</dbReference>
<dbReference type="GlyGen" id="P50592">
    <property type="glycosylation" value="1 site"/>
</dbReference>
<dbReference type="iPTMnet" id="P50592"/>
<dbReference type="PhosphoSitePlus" id="P50592"/>
<dbReference type="PaxDb" id="10090-ENSMUSP00000040271"/>
<dbReference type="ProteomicsDB" id="259272"/>
<dbReference type="Antibodypedia" id="3728">
    <property type="antibodies" value="1344 antibodies from 50 providers"/>
</dbReference>
<dbReference type="DNASU" id="22035"/>
<dbReference type="Ensembl" id="ENSMUST00000046383.12">
    <property type="protein sequence ID" value="ENSMUSP00000040271.6"/>
    <property type="gene ID" value="ENSMUSG00000039304.12"/>
</dbReference>
<dbReference type="GeneID" id="22035"/>
<dbReference type="KEGG" id="mmu:22035"/>
<dbReference type="UCSC" id="uc008otm.1">
    <property type="organism name" value="mouse"/>
</dbReference>
<dbReference type="AGR" id="MGI:107414"/>
<dbReference type="CTD" id="8743"/>
<dbReference type="MGI" id="MGI:107414">
    <property type="gene designation" value="Tnfsf10"/>
</dbReference>
<dbReference type="VEuPathDB" id="HostDB:ENSMUSG00000039304"/>
<dbReference type="eggNOG" id="ENOG502QQ3R">
    <property type="taxonomic scope" value="Eukaryota"/>
</dbReference>
<dbReference type="GeneTree" id="ENSGT01130000278318"/>
<dbReference type="HOGENOM" id="CLU_070352_1_0_1"/>
<dbReference type="InParanoid" id="P50592"/>
<dbReference type="OMA" id="NGDIVDM"/>
<dbReference type="OrthoDB" id="9446605at2759"/>
<dbReference type="PhylomeDB" id="P50592"/>
<dbReference type="TreeFam" id="TF332169"/>
<dbReference type="Reactome" id="R-MMU-3371378">
    <property type="pathway name" value="Regulation by c-FLIP"/>
</dbReference>
<dbReference type="Reactome" id="R-MMU-5218900">
    <property type="pathway name" value="CASP8 activity is inhibited"/>
</dbReference>
<dbReference type="Reactome" id="R-MMU-69416">
    <property type="pathway name" value="Dimerization of procaspase-8"/>
</dbReference>
<dbReference type="Reactome" id="R-MMU-75158">
    <property type="pathway name" value="TRAIL signaling"/>
</dbReference>
<dbReference type="BioGRID-ORCS" id="22035">
    <property type="hits" value="1 hit in 76 CRISPR screens"/>
</dbReference>
<dbReference type="ChiTaRS" id="Tnfsf10">
    <property type="organism name" value="mouse"/>
</dbReference>
<dbReference type="PRO" id="PR:P50592"/>
<dbReference type="Proteomes" id="UP000000589">
    <property type="component" value="Chromosome 3"/>
</dbReference>
<dbReference type="RNAct" id="P50592">
    <property type="molecule type" value="protein"/>
</dbReference>
<dbReference type="Bgee" id="ENSMUSG00000039304">
    <property type="expression patterns" value="Expressed in small intestine Peyer's patch and 102 other cell types or tissues"/>
</dbReference>
<dbReference type="ExpressionAtlas" id="P50592">
    <property type="expression patterns" value="baseline and differential"/>
</dbReference>
<dbReference type="GO" id="GO:0005615">
    <property type="term" value="C:extracellular space"/>
    <property type="evidence" value="ECO:0007669"/>
    <property type="project" value="UniProtKB-KW"/>
</dbReference>
<dbReference type="GO" id="GO:0005886">
    <property type="term" value="C:plasma membrane"/>
    <property type="evidence" value="ECO:0007669"/>
    <property type="project" value="UniProtKB-SubCell"/>
</dbReference>
<dbReference type="GO" id="GO:0005125">
    <property type="term" value="F:cytokine activity"/>
    <property type="evidence" value="ECO:0007669"/>
    <property type="project" value="UniProtKB-KW"/>
</dbReference>
<dbReference type="GO" id="GO:0042802">
    <property type="term" value="F:identical protein binding"/>
    <property type="evidence" value="ECO:0000250"/>
    <property type="project" value="UniProtKB"/>
</dbReference>
<dbReference type="GO" id="GO:0045569">
    <property type="term" value="F:TRAIL binding"/>
    <property type="evidence" value="ECO:0000314"/>
    <property type="project" value="UniProtKB"/>
</dbReference>
<dbReference type="GO" id="GO:0005164">
    <property type="term" value="F:tumor necrosis factor receptor binding"/>
    <property type="evidence" value="ECO:0007669"/>
    <property type="project" value="InterPro"/>
</dbReference>
<dbReference type="GO" id="GO:0032813">
    <property type="term" value="F:tumor necrosis factor receptor superfamily binding"/>
    <property type="evidence" value="ECO:0000353"/>
    <property type="project" value="MGI"/>
</dbReference>
<dbReference type="GO" id="GO:0008270">
    <property type="term" value="F:zinc ion binding"/>
    <property type="evidence" value="ECO:0000250"/>
    <property type="project" value="UniProtKB"/>
</dbReference>
<dbReference type="GO" id="GO:0006955">
    <property type="term" value="P:immune response"/>
    <property type="evidence" value="ECO:0007669"/>
    <property type="project" value="InterPro"/>
</dbReference>
<dbReference type="GO" id="GO:0043123">
    <property type="term" value="P:positive regulation of canonical NF-kappaB signal transduction"/>
    <property type="evidence" value="ECO:0007669"/>
    <property type="project" value="Ensembl"/>
</dbReference>
<dbReference type="GO" id="GO:2001238">
    <property type="term" value="P:positive regulation of extrinsic apoptotic signaling pathway"/>
    <property type="evidence" value="ECO:0000314"/>
    <property type="project" value="MGI"/>
</dbReference>
<dbReference type="GO" id="GO:0090200">
    <property type="term" value="P:positive regulation of release of cytochrome c from mitochondria"/>
    <property type="evidence" value="ECO:0007669"/>
    <property type="project" value="Ensembl"/>
</dbReference>
<dbReference type="GO" id="GO:0036462">
    <property type="term" value="P:TRAIL-activated apoptotic signaling pathway"/>
    <property type="evidence" value="ECO:0007669"/>
    <property type="project" value="Ensembl"/>
</dbReference>
<dbReference type="CDD" id="cd00184">
    <property type="entry name" value="TNF"/>
    <property type="match status" value="1"/>
</dbReference>
<dbReference type="FunFam" id="2.60.120.40:FF:000014">
    <property type="entry name" value="Tumor necrosis factor ligand superfamily member"/>
    <property type="match status" value="1"/>
</dbReference>
<dbReference type="Gene3D" id="2.60.120.40">
    <property type="match status" value="1"/>
</dbReference>
<dbReference type="InterPro" id="IPR021184">
    <property type="entry name" value="TNF_CS"/>
</dbReference>
<dbReference type="InterPro" id="IPR006052">
    <property type="entry name" value="TNF_dom"/>
</dbReference>
<dbReference type="InterPro" id="IPR017355">
    <property type="entry name" value="TNF_ligand_10/11"/>
</dbReference>
<dbReference type="InterPro" id="IPR008983">
    <property type="entry name" value="Tumour_necrosis_fac-like_dom"/>
</dbReference>
<dbReference type="PANTHER" id="PTHR11471">
    <property type="entry name" value="TUMOR NECROSIS FACTOR FAMILY MEMBER"/>
    <property type="match status" value="1"/>
</dbReference>
<dbReference type="PANTHER" id="PTHR11471:SF27">
    <property type="entry name" value="TUMOR NECROSIS FACTOR LIGAND SUPERFAMILY MEMBER 10"/>
    <property type="match status" value="1"/>
</dbReference>
<dbReference type="Pfam" id="PF00229">
    <property type="entry name" value="TNF"/>
    <property type="match status" value="1"/>
</dbReference>
<dbReference type="PIRSF" id="PIRSF038013">
    <property type="entry name" value="TNF10_TNF11"/>
    <property type="match status" value="1"/>
</dbReference>
<dbReference type="SMART" id="SM00207">
    <property type="entry name" value="TNF"/>
    <property type="match status" value="1"/>
</dbReference>
<dbReference type="SUPFAM" id="SSF49842">
    <property type="entry name" value="TNF-like"/>
    <property type="match status" value="1"/>
</dbReference>
<dbReference type="PROSITE" id="PS00251">
    <property type="entry name" value="THD_1"/>
    <property type="match status" value="1"/>
</dbReference>
<dbReference type="PROSITE" id="PS50049">
    <property type="entry name" value="THD_2"/>
    <property type="match status" value="1"/>
</dbReference>
<proteinExistence type="evidence at protein level"/>
<keyword id="KW-0002">3D-structure</keyword>
<keyword id="KW-0053">Apoptosis</keyword>
<keyword id="KW-1003">Cell membrane</keyword>
<keyword id="KW-0202">Cytokine</keyword>
<keyword id="KW-0325">Glycoprotein</keyword>
<keyword id="KW-0472">Membrane</keyword>
<keyword id="KW-0479">Metal-binding</keyword>
<keyword id="KW-0597">Phosphoprotein</keyword>
<keyword id="KW-1185">Reference proteome</keyword>
<keyword id="KW-0964">Secreted</keyword>
<keyword id="KW-0735">Signal-anchor</keyword>
<keyword id="KW-0812">Transmembrane</keyword>
<keyword id="KW-1133">Transmembrane helix</keyword>
<keyword id="KW-0862">Zinc</keyword>
<evidence type="ECO:0000250" key="1">
    <source>
        <dbReference type="UniProtKB" id="P50591"/>
    </source>
</evidence>
<evidence type="ECO:0000255" key="2"/>
<evidence type="ECO:0000255" key="3">
    <source>
        <dbReference type="PROSITE-ProRule" id="PRU01387"/>
    </source>
</evidence>
<evidence type="ECO:0000305" key="4"/>
<accession>P50592</accession>
<organism>
    <name type="scientific">Mus musculus</name>
    <name type="common">Mouse</name>
    <dbReference type="NCBI Taxonomy" id="10090"/>
    <lineage>
        <taxon>Eukaryota</taxon>
        <taxon>Metazoa</taxon>
        <taxon>Chordata</taxon>
        <taxon>Craniata</taxon>
        <taxon>Vertebrata</taxon>
        <taxon>Euteleostomi</taxon>
        <taxon>Mammalia</taxon>
        <taxon>Eutheria</taxon>
        <taxon>Euarchontoglires</taxon>
        <taxon>Glires</taxon>
        <taxon>Rodentia</taxon>
        <taxon>Myomorpha</taxon>
        <taxon>Muroidea</taxon>
        <taxon>Muridae</taxon>
        <taxon>Murinae</taxon>
        <taxon>Mus</taxon>
        <taxon>Mus</taxon>
    </lineage>
</organism>
<comment type="function">
    <text evidence="1">Cytokine that binds to TNFRSF10A/TRAILR1, TNFRSF10B/TRAILR2, TNFRSF10C/TRAILR3, TNFRSF10D/TRAILR4 and possibly also to TNFRSF11B/OPG. Induces apoptosis. Its activity may be modulated by binding to the decoy receptors TNFRSF10C/TRAILR3, TNFRSF10D/TRAILR4 and TNFRSF11B/OPG that cannot induce apoptosis.</text>
</comment>
<comment type="subunit">
    <text evidence="1">Homotrimer. One TNFSF10 homotrimer interacts with three TNFSF10A mononers. One TNFSF10 homotrimer interacts with three TNFSF10B mononers.</text>
</comment>
<comment type="subcellular location">
    <subcellularLocation>
        <location evidence="1">Cell membrane</location>
        <topology evidence="1">Single-pass type II membrane protein</topology>
    </subcellularLocation>
    <subcellularLocation>
        <location evidence="1">Secreted</location>
    </subcellularLocation>
    <text evidence="1">Exists both as membrane-bound and soluble form.</text>
</comment>
<comment type="tissue specificity">
    <text>Widespread.</text>
</comment>
<comment type="PTM">
    <text evidence="1">Tyrosine phosphorylated by PKDCC/VLK.</text>
</comment>
<comment type="similarity">
    <text evidence="4">Belongs to the tumor necrosis factor family.</text>
</comment>
<name>TNF10_MOUSE</name>
<gene>
    <name type="primary">Tnfsf10</name>
    <name type="synonym">Trail</name>
</gene>